<organism>
    <name type="scientific">Xenopus tropicalis</name>
    <name type="common">Western clawed frog</name>
    <name type="synonym">Silurana tropicalis</name>
    <dbReference type="NCBI Taxonomy" id="8364"/>
    <lineage>
        <taxon>Eukaryota</taxon>
        <taxon>Metazoa</taxon>
        <taxon>Chordata</taxon>
        <taxon>Craniata</taxon>
        <taxon>Vertebrata</taxon>
        <taxon>Euteleostomi</taxon>
        <taxon>Amphibia</taxon>
        <taxon>Batrachia</taxon>
        <taxon>Anura</taxon>
        <taxon>Pipoidea</taxon>
        <taxon>Pipidae</taxon>
        <taxon>Xenopodinae</taxon>
        <taxon>Xenopus</taxon>
        <taxon>Silurana</taxon>
    </lineage>
</organism>
<reference key="1">
    <citation type="journal article" date="2010" name="Science">
        <title>The genome of the Western clawed frog Xenopus tropicalis.</title>
        <authorList>
            <person name="Hellsten U."/>
            <person name="Harland R.M."/>
            <person name="Gilchrist M.J."/>
            <person name="Hendrix D."/>
            <person name="Jurka J."/>
            <person name="Kapitonov V."/>
            <person name="Ovcharenko I."/>
            <person name="Putnam N.H."/>
            <person name="Shu S."/>
            <person name="Taher L."/>
            <person name="Blitz I.L."/>
            <person name="Blumberg B."/>
            <person name="Dichmann D.S."/>
            <person name="Dubchak I."/>
            <person name="Amaya E."/>
            <person name="Detter J.C."/>
            <person name="Fletcher R."/>
            <person name="Gerhard D.S."/>
            <person name="Goodstein D."/>
            <person name="Graves T."/>
            <person name="Grigoriev I.V."/>
            <person name="Grimwood J."/>
            <person name="Kawashima T."/>
            <person name="Lindquist E."/>
            <person name="Lucas S.M."/>
            <person name="Mead P.E."/>
            <person name="Mitros T."/>
            <person name="Ogino H."/>
            <person name="Ohta Y."/>
            <person name="Poliakov A.V."/>
            <person name="Pollet N."/>
            <person name="Robert J."/>
            <person name="Salamov A."/>
            <person name="Sater A.K."/>
            <person name="Schmutz J."/>
            <person name="Terry A."/>
            <person name="Vize P.D."/>
            <person name="Warren W.C."/>
            <person name="Wells D."/>
            <person name="Wills A."/>
            <person name="Wilson R.K."/>
            <person name="Zimmerman L.B."/>
            <person name="Zorn A.M."/>
            <person name="Grainger R."/>
            <person name="Grammer T."/>
            <person name="Khokha M.K."/>
            <person name="Richardson P.M."/>
            <person name="Rokhsar D.S."/>
        </authorList>
    </citation>
    <scope>NUCLEOTIDE SEQUENCE [LARGE SCALE GENOMIC DNA]</scope>
</reference>
<evidence type="ECO:0000250" key="1"/>
<evidence type="ECO:0000250" key="2">
    <source>
        <dbReference type="UniProtKB" id="F1RA39"/>
    </source>
</evidence>
<evidence type="ECO:0000250" key="3">
    <source>
        <dbReference type="UniProtKB" id="O94851"/>
    </source>
</evidence>
<evidence type="ECO:0000250" key="4">
    <source>
        <dbReference type="UniProtKB" id="Q8BML1"/>
    </source>
</evidence>
<evidence type="ECO:0000250" key="5">
    <source>
        <dbReference type="UniProtKB" id="Q8TDZ2"/>
    </source>
</evidence>
<evidence type="ECO:0000250" key="6">
    <source>
        <dbReference type="UniProtKB" id="Q8VDP3"/>
    </source>
</evidence>
<evidence type="ECO:0000255" key="7">
    <source>
        <dbReference type="PROSITE-ProRule" id="PRU00044"/>
    </source>
</evidence>
<evidence type="ECO:0000255" key="8">
    <source>
        <dbReference type="PROSITE-ProRule" id="PRU00125"/>
    </source>
</evidence>
<evidence type="ECO:0000256" key="9">
    <source>
        <dbReference type="SAM" id="MobiDB-lite"/>
    </source>
</evidence>
<evidence type="ECO:0000305" key="10"/>
<keyword id="KW-0009">Actin-binding</keyword>
<keyword id="KW-0963">Cytoplasm</keyword>
<keyword id="KW-0274">FAD</keyword>
<keyword id="KW-0285">Flavoprotein</keyword>
<keyword id="KW-0440">LIM domain</keyword>
<keyword id="KW-0479">Metal-binding</keyword>
<keyword id="KW-0503">Monooxygenase</keyword>
<keyword id="KW-0521">NADP</keyword>
<keyword id="KW-0539">Nucleus</keyword>
<keyword id="KW-0560">Oxidoreductase</keyword>
<keyword id="KW-1185">Reference proteome</keyword>
<keyword id="KW-0862">Zinc</keyword>
<name>MICA2_XENTR</name>
<sequence length="1126" mass="125940">MGENGDDKHGRSGQLFENFIQATTCKGTLQAFNILTRQLELDPQDHRHFYAKLKSKVTSWKAKALWNKLDKKHGQKEYKKGKACIGTKCLIIGGGPCGLRTAIELSCLGAKVVVVEKRDTFSRNNVLHLWPYTIHDLRCLGAKKFYGKFCAGAIDHISIWQLQLMLFKIALLHGIEIHVNVEFMKLLEPLEDQENQNIIALFCTESESPDNSECKTRLSAPVVFRCIVGIGGDHSFPNTLAFAFIYIYMNRNKEAVGPSPVWALAGRPRPLHTALLQPGRQQNRIDLENIVYYKDSTHYFVMTAKKQSLLDKGVIINDYADAEMLLCAENVDQDNLQSYAREAADFATNYQLPSLDFAINHYGQPDVAMFDFTSMYASENAALVRERHGHQLLVALVGDSLLEPFWPMGTGCARGFLAAFDTAWMVRSWAQGALPLELLAERISLLIFLNHRLTWQFLNPKKGLQTCHPNVWIPSHALRLSHHVKHLFITNELQTCSLERASSIRRSVGVSRHESDVRPNKLLIWCQKQTEGYGNVTVTNLTSSWKSGLALCALIHRFRPELVDFGSLKEDDVVGNNQLAFDIAEREFGISPMTTGKEMAATEEPDKLSMVLYLSKFYELFRGAPLRPVDTASKDNGDARSAKPSNLIVNNYLNLTLPRKRVPKDEKTSDDSDLNKRRKTVFRCFEEPANVPSRNVNSGNECNDTKEVINQNKVKSMATQLLAKFEENAPNTSLRRQESLTLSEADQAVTAPLTDPPPVNPRFAKPQEPTPSPPQAETKRQFQAVSRTQPVVRPPVQPRPGPAKPTRELRVVERAQSHPDDLGRSESLSSACPSALVLSNILERLQDLEEKAQQKRAQNLANRDFHKKNIKEKAAHLASLFGSVDLPKNKLPSLGFSHHSPQIPYSSSRTPDPPPPSSSSDSSPSSAPSRKSGMSWKGSTFFSKHSLNVWILMTVGKVSSGIGAVAEVLVNLYMCDHKPKPKSSHLGSLRKEFPANIGGSDTCYFCKRRVYVVERLSAEGHFFHRECFKCAFCSTSIRLGNYVFNVEDGNFYCQPHFMHSVTKNKHRKRRTESKAQLEEDKTWRSGEAEAAEVATDSAYSACSSSGDSSPVPLVPFNIPVLDPLIG</sequence>
<feature type="chain" id="PRO_0000416303" description="[F-actin]-monooxygenase mical2">
    <location>
        <begin position="1"/>
        <end position="1126"/>
    </location>
</feature>
<feature type="domain" description="Calponin-homology (CH)" evidence="7">
    <location>
        <begin position="516"/>
        <end position="619"/>
    </location>
</feature>
<feature type="domain" description="LIM zinc-binding" evidence="8">
    <location>
        <begin position="1001"/>
        <end position="1063"/>
    </location>
</feature>
<feature type="region of interest" description="Monooxygenase domain" evidence="6">
    <location>
        <begin position="2"/>
        <end position="494"/>
    </location>
</feature>
<feature type="region of interest" description="Disordered" evidence="9">
    <location>
        <begin position="748"/>
        <end position="830"/>
    </location>
</feature>
<feature type="region of interest" description="Disordered" evidence="9">
    <location>
        <begin position="892"/>
        <end position="935"/>
    </location>
</feature>
<feature type="short sequence motif" description="Nuclear localization signal" evidence="1">
    <location>
        <begin position="659"/>
        <end position="680"/>
    </location>
</feature>
<feature type="compositionally biased region" description="Pro residues" evidence="9">
    <location>
        <begin position="792"/>
        <end position="803"/>
    </location>
</feature>
<feature type="compositionally biased region" description="Basic and acidic residues" evidence="9">
    <location>
        <begin position="805"/>
        <end position="824"/>
    </location>
</feature>
<feature type="compositionally biased region" description="Low complexity" evidence="9">
    <location>
        <begin position="918"/>
        <end position="932"/>
    </location>
</feature>
<feature type="binding site" evidence="6">
    <location>
        <position position="97"/>
    </location>
    <ligand>
        <name>FAD</name>
        <dbReference type="ChEBI" id="CHEBI:57692"/>
    </ligand>
</feature>
<feature type="binding site" evidence="6">
    <location>
        <begin position="116"/>
        <end position="118"/>
    </location>
    <ligand>
        <name>FAD</name>
        <dbReference type="ChEBI" id="CHEBI:57692"/>
    </ligand>
</feature>
<feature type="binding site" evidence="6">
    <location>
        <begin position="123"/>
        <end position="125"/>
    </location>
    <ligand>
        <name>FAD</name>
        <dbReference type="ChEBI" id="CHEBI:57692"/>
    </ligand>
</feature>
<feature type="binding site" evidence="6">
    <location>
        <position position="183"/>
    </location>
    <ligand>
        <name>FAD</name>
        <dbReference type="ChEBI" id="CHEBI:57692"/>
    </ligand>
</feature>
<feature type="binding site" evidence="6">
    <location>
        <position position="299"/>
    </location>
    <ligand>
        <name>FAD</name>
        <dbReference type="ChEBI" id="CHEBI:57692"/>
    </ligand>
</feature>
<feature type="binding site" evidence="6">
    <location>
        <position position="399"/>
    </location>
    <ligand>
        <name>FAD</name>
        <dbReference type="ChEBI" id="CHEBI:57692"/>
    </ligand>
</feature>
<feature type="binding site" evidence="5">
    <location>
        <position position="1003"/>
    </location>
    <ligand>
        <name>Zn(2+)</name>
        <dbReference type="ChEBI" id="CHEBI:29105"/>
        <label>1</label>
    </ligand>
</feature>
<feature type="binding site" evidence="5">
    <location>
        <position position="1006"/>
    </location>
    <ligand>
        <name>Zn(2+)</name>
        <dbReference type="ChEBI" id="CHEBI:29105"/>
        <label>1</label>
    </ligand>
</feature>
<feature type="binding site" evidence="5">
    <location>
        <position position="1024"/>
    </location>
    <ligand>
        <name>Zn(2+)</name>
        <dbReference type="ChEBI" id="CHEBI:29105"/>
        <label>1</label>
    </ligand>
</feature>
<feature type="binding site" evidence="5">
    <location>
        <position position="1027"/>
    </location>
    <ligand>
        <name>Zn(2+)</name>
        <dbReference type="ChEBI" id="CHEBI:29105"/>
        <label>1</label>
    </ligand>
</feature>
<feature type="binding site" evidence="5">
    <location>
        <position position="1030"/>
    </location>
    <ligand>
        <name>Zn(2+)</name>
        <dbReference type="ChEBI" id="CHEBI:29105"/>
        <label>2</label>
    </ligand>
</feature>
<feature type="binding site" evidence="5">
    <location>
        <position position="1033"/>
    </location>
    <ligand>
        <name>Zn(2+)</name>
        <dbReference type="ChEBI" id="CHEBI:29105"/>
        <label>2</label>
    </ligand>
</feature>
<feature type="binding site" evidence="5">
    <location>
        <position position="1053"/>
    </location>
    <ligand>
        <name>Zn(2+)</name>
        <dbReference type="ChEBI" id="CHEBI:29105"/>
        <label>2</label>
    </ligand>
</feature>
<feature type="binding site" evidence="5">
    <location>
        <position position="1056"/>
    </location>
    <ligand>
        <name>Zn(2+)</name>
        <dbReference type="ChEBI" id="CHEBI:29105"/>
        <label>2</label>
    </ligand>
</feature>
<dbReference type="EC" id="1.14.13.225" evidence="3"/>
<dbReference type="EMBL" id="AAMC01118102">
    <property type="status" value="NOT_ANNOTATED_CDS"/>
    <property type="molecule type" value="Genomic_DNA"/>
</dbReference>
<dbReference type="EMBL" id="AAMC01118103">
    <property type="status" value="NOT_ANNOTATED_CDS"/>
    <property type="molecule type" value="Genomic_DNA"/>
</dbReference>
<dbReference type="EMBL" id="AAMC01118104">
    <property type="status" value="NOT_ANNOTATED_CDS"/>
    <property type="molecule type" value="Genomic_DNA"/>
</dbReference>
<dbReference type="EMBL" id="AAMC01118105">
    <property type="status" value="NOT_ANNOTATED_CDS"/>
    <property type="molecule type" value="Genomic_DNA"/>
</dbReference>
<dbReference type="EMBL" id="AAMC01118106">
    <property type="status" value="NOT_ANNOTATED_CDS"/>
    <property type="molecule type" value="Genomic_DNA"/>
</dbReference>
<dbReference type="EMBL" id="AAMC01118107">
    <property type="status" value="NOT_ANNOTATED_CDS"/>
    <property type="molecule type" value="Genomic_DNA"/>
</dbReference>
<dbReference type="EMBL" id="AAMC01118108">
    <property type="status" value="NOT_ANNOTATED_CDS"/>
    <property type="molecule type" value="Genomic_DNA"/>
</dbReference>
<dbReference type="EMBL" id="AAMC01118109">
    <property type="status" value="NOT_ANNOTATED_CDS"/>
    <property type="molecule type" value="Genomic_DNA"/>
</dbReference>
<dbReference type="EMBL" id="AAMC01118110">
    <property type="status" value="NOT_ANNOTATED_CDS"/>
    <property type="molecule type" value="Genomic_DNA"/>
</dbReference>
<dbReference type="EMBL" id="AAMC01118111">
    <property type="status" value="NOT_ANNOTATED_CDS"/>
    <property type="molecule type" value="Genomic_DNA"/>
</dbReference>
<dbReference type="EMBL" id="AAMC01118112">
    <property type="status" value="NOT_ANNOTATED_CDS"/>
    <property type="molecule type" value="Genomic_DNA"/>
</dbReference>
<dbReference type="EMBL" id="AAMC01118113">
    <property type="status" value="NOT_ANNOTATED_CDS"/>
    <property type="molecule type" value="Genomic_DNA"/>
</dbReference>
<dbReference type="EMBL" id="AAMC01118114">
    <property type="status" value="NOT_ANNOTATED_CDS"/>
    <property type="molecule type" value="Genomic_DNA"/>
</dbReference>
<dbReference type="EMBL" id="AAMC01118115">
    <property type="status" value="NOT_ANNOTATED_CDS"/>
    <property type="molecule type" value="Genomic_DNA"/>
</dbReference>
<dbReference type="EMBL" id="AAMC01118116">
    <property type="status" value="NOT_ANNOTATED_CDS"/>
    <property type="molecule type" value="Genomic_DNA"/>
</dbReference>
<dbReference type="EMBL" id="AAMC01118117">
    <property type="status" value="NOT_ANNOTATED_CDS"/>
    <property type="molecule type" value="Genomic_DNA"/>
</dbReference>
<dbReference type="EMBL" id="AAMC01118118">
    <property type="status" value="NOT_ANNOTATED_CDS"/>
    <property type="molecule type" value="Genomic_DNA"/>
</dbReference>
<dbReference type="EMBL" id="AAMC01118119">
    <property type="status" value="NOT_ANNOTATED_CDS"/>
    <property type="molecule type" value="Genomic_DNA"/>
</dbReference>
<dbReference type="EMBL" id="AAMC01118120">
    <property type="status" value="NOT_ANNOTATED_CDS"/>
    <property type="molecule type" value="Genomic_DNA"/>
</dbReference>
<dbReference type="EMBL" id="AAMC01118121">
    <property type="status" value="NOT_ANNOTATED_CDS"/>
    <property type="molecule type" value="Genomic_DNA"/>
</dbReference>
<dbReference type="EMBL" id="AAMC01118122">
    <property type="status" value="NOT_ANNOTATED_CDS"/>
    <property type="molecule type" value="Genomic_DNA"/>
</dbReference>
<dbReference type="EMBL" id="AAMC01118123">
    <property type="status" value="NOT_ANNOTATED_CDS"/>
    <property type="molecule type" value="Genomic_DNA"/>
</dbReference>
<dbReference type="EMBL" id="AAMC01118124">
    <property type="status" value="NOT_ANNOTATED_CDS"/>
    <property type="molecule type" value="Genomic_DNA"/>
</dbReference>
<dbReference type="EMBL" id="AAMC01118125">
    <property type="status" value="NOT_ANNOTATED_CDS"/>
    <property type="molecule type" value="Genomic_DNA"/>
</dbReference>
<dbReference type="EMBL" id="AAMC01118126">
    <property type="status" value="NOT_ANNOTATED_CDS"/>
    <property type="molecule type" value="Genomic_DNA"/>
</dbReference>
<dbReference type="EMBL" id="AAMC01118127">
    <property type="status" value="NOT_ANNOTATED_CDS"/>
    <property type="molecule type" value="Genomic_DNA"/>
</dbReference>
<dbReference type="SMR" id="F6QZ15"/>
<dbReference type="FunCoup" id="F6QZ15">
    <property type="interactions" value="1276"/>
</dbReference>
<dbReference type="STRING" id="8364.ENSXETP00000049067"/>
<dbReference type="PaxDb" id="8364-ENSXETP00000029978"/>
<dbReference type="eggNOG" id="KOG1700">
    <property type="taxonomic scope" value="Eukaryota"/>
</dbReference>
<dbReference type="HOGENOM" id="CLU_000329_0_1_1"/>
<dbReference type="InParanoid" id="F6QZ15"/>
<dbReference type="TreeFam" id="TF324129"/>
<dbReference type="Proteomes" id="UP000008143">
    <property type="component" value="Unplaced"/>
</dbReference>
<dbReference type="GO" id="GO:0005737">
    <property type="term" value="C:cytoplasm"/>
    <property type="evidence" value="ECO:0007669"/>
    <property type="project" value="UniProtKB-SubCell"/>
</dbReference>
<dbReference type="GO" id="GO:0005634">
    <property type="term" value="C:nucleus"/>
    <property type="evidence" value="ECO:0000250"/>
    <property type="project" value="UniProtKB"/>
</dbReference>
<dbReference type="GO" id="GO:0003779">
    <property type="term" value="F:actin binding"/>
    <property type="evidence" value="ECO:0000250"/>
    <property type="project" value="UniProtKB"/>
</dbReference>
<dbReference type="GO" id="GO:0120501">
    <property type="term" value="F:F-actin monooxygenase activity"/>
    <property type="evidence" value="ECO:0007669"/>
    <property type="project" value="UniProtKB-EC"/>
</dbReference>
<dbReference type="GO" id="GO:0071949">
    <property type="term" value="F:FAD binding"/>
    <property type="evidence" value="ECO:0000250"/>
    <property type="project" value="UniProtKB"/>
</dbReference>
<dbReference type="GO" id="GO:0046872">
    <property type="term" value="F:metal ion binding"/>
    <property type="evidence" value="ECO:0007669"/>
    <property type="project" value="UniProtKB-KW"/>
</dbReference>
<dbReference type="GO" id="GO:0016491">
    <property type="term" value="F:oxidoreductase activity"/>
    <property type="evidence" value="ECO:0000250"/>
    <property type="project" value="UniProtKB"/>
</dbReference>
<dbReference type="GO" id="GO:0016709">
    <property type="term" value="F:oxidoreductase activity, acting on paired donors, with incorporation or reduction of molecular oxygen, NAD(P)H as one donor, and incorporation of one atom of oxygen"/>
    <property type="evidence" value="ECO:0000250"/>
    <property type="project" value="UniProtKB"/>
</dbReference>
<dbReference type="GO" id="GO:0030042">
    <property type="term" value="P:actin filament depolymerization"/>
    <property type="evidence" value="ECO:0000250"/>
    <property type="project" value="UniProtKB"/>
</dbReference>
<dbReference type="GO" id="GO:0007010">
    <property type="term" value="P:cytoskeleton organization"/>
    <property type="evidence" value="ECO:0000250"/>
    <property type="project" value="UniProtKB"/>
</dbReference>
<dbReference type="GO" id="GO:0007507">
    <property type="term" value="P:heart development"/>
    <property type="evidence" value="ECO:0000250"/>
    <property type="project" value="UniProtKB"/>
</dbReference>
<dbReference type="GO" id="GO:0001947">
    <property type="term" value="P:heart looping"/>
    <property type="evidence" value="ECO:0000250"/>
    <property type="project" value="UniProtKB"/>
</dbReference>
<dbReference type="GO" id="GO:0045944">
    <property type="term" value="P:positive regulation of transcription by RNA polymerase II"/>
    <property type="evidence" value="ECO:0000250"/>
    <property type="project" value="UniProtKB"/>
</dbReference>
<dbReference type="GO" id="GO:0019417">
    <property type="term" value="P:sulfur oxidation"/>
    <property type="evidence" value="ECO:0000250"/>
    <property type="project" value="UniProtKB"/>
</dbReference>
<dbReference type="CDD" id="cd21250">
    <property type="entry name" value="CH_MICAL2"/>
    <property type="match status" value="1"/>
</dbReference>
<dbReference type="CDD" id="cd09439">
    <property type="entry name" value="LIM_Mical"/>
    <property type="match status" value="1"/>
</dbReference>
<dbReference type="FunFam" id="3.50.50.60:FF:000004">
    <property type="entry name" value="protein-methionine sulfoxide oxidase MICAL2 isoform X1"/>
    <property type="match status" value="1"/>
</dbReference>
<dbReference type="FunFam" id="2.10.110.10:FF:000043">
    <property type="entry name" value="protein-methionine sulfoxide oxidase MICAL3 isoform X2"/>
    <property type="match status" value="1"/>
</dbReference>
<dbReference type="Gene3D" id="1.10.418.10">
    <property type="entry name" value="Calponin-like domain"/>
    <property type="match status" value="1"/>
</dbReference>
<dbReference type="Gene3D" id="2.10.110.10">
    <property type="entry name" value="Cysteine Rich Protein"/>
    <property type="match status" value="1"/>
</dbReference>
<dbReference type="Gene3D" id="3.50.50.60">
    <property type="entry name" value="FAD/NAD(P)-binding domain"/>
    <property type="match status" value="1"/>
</dbReference>
<dbReference type="InterPro" id="IPR001715">
    <property type="entry name" value="CH_dom"/>
</dbReference>
<dbReference type="InterPro" id="IPR036872">
    <property type="entry name" value="CH_dom_sf"/>
</dbReference>
<dbReference type="InterPro" id="IPR050540">
    <property type="entry name" value="F-actin_Monoox_Mical"/>
</dbReference>
<dbReference type="InterPro" id="IPR002938">
    <property type="entry name" value="FAD-bd"/>
</dbReference>
<dbReference type="InterPro" id="IPR036188">
    <property type="entry name" value="FAD/NAD-bd_sf"/>
</dbReference>
<dbReference type="InterPro" id="IPR001781">
    <property type="entry name" value="Znf_LIM"/>
</dbReference>
<dbReference type="PANTHER" id="PTHR23167:SF39">
    <property type="entry name" value="[F-ACTIN]-MONOOXYGENASE MICAL2"/>
    <property type="match status" value="1"/>
</dbReference>
<dbReference type="PANTHER" id="PTHR23167">
    <property type="entry name" value="CALPONIN HOMOLOGY DOMAIN-CONTAINING PROTEIN DDB_G0272472-RELATED"/>
    <property type="match status" value="1"/>
</dbReference>
<dbReference type="Pfam" id="PF00307">
    <property type="entry name" value="CH"/>
    <property type="match status" value="1"/>
</dbReference>
<dbReference type="Pfam" id="PF01494">
    <property type="entry name" value="FAD_binding_3"/>
    <property type="match status" value="1"/>
</dbReference>
<dbReference type="Pfam" id="PF00412">
    <property type="entry name" value="LIM"/>
    <property type="match status" value="1"/>
</dbReference>
<dbReference type="Pfam" id="PF25413">
    <property type="entry name" value="Rossman_Mical"/>
    <property type="match status" value="1"/>
</dbReference>
<dbReference type="SMART" id="SM00033">
    <property type="entry name" value="CH"/>
    <property type="match status" value="1"/>
</dbReference>
<dbReference type="SMART" id="SM00132">
    <property type="entry name" value="LIM"/>
    <property type="match status" value="1"/>
</dbReference>
<dbReference type="SUPFAM" id="SSF47576">
    <property type="entry name" value="Calponin-homology domain, CH-domain"/>
    <property type="match status" value="1"/>
</dbReference>
<dbReference type="SUPFAM" id="SSF51905">
    <property type="entry name" value="FAD/NAD(P)-binding domain"/>
    <property type="match status" value="1"/>
</dbReference>
<dbReference type="SUPFAM" id="SSF57716">
    <property type="entry name" value="Glucocorticoid receptor-like (DNA-binding domain)"/>
    <property type="match status" value="2"/>
</dbReference>
<dbReference type="PROSITE" id="PS50021">
    <property type="entry name" value="CH"/>
    <property type="match status" value="1"/>
</dbReference>
<dbReference type="PROSITE" id="PS00478">
    <property type="entry name" value="LIM_DOMAIN_1"/>
    <property type="match status" value="1"/>
</dbReference>
<dbReference type="PROSITE" id="PS50023">
    <property type="entry name" value="LIM_DOMAIN_2"/>
    <property type="match status" value="1"/>
</dbReference>
<comment type="function">
    <text evidence="2 3">Nuclear monooxygenase that promotes depolymerization of F-actin by mediating oxidation of specific methionine residues on actin and regulates the srf signaling. Acts by modifying nuclear actin subunits through the addition of oxygen to form methionine-sulfoxide, leading to promote actin filament severing and prevent repolymerization (By similarity). Acts as a key regulator of the srf signaling pathway elicited by nerve growth factor and serum: mediates oxidation and subsequent depolymerization of nuclear actin, leading to increase mkl1/mrtf-a presence in the nucleus and promote srf:mkl1/mrtf-a-dependent gene transcription (By similarity).</text>
</comment>
<comment type="catalytic activity">
    <reaction evidence="3">
        <text>L-methionyl-[F-actin] + NADPH + O2 + H(+) = L-methionyl-(R)-S-oxide-[F-actin] + NADP(+) + H2O</text>
        <dbReference type="Rhea" id="RHEA:51308"/>
        <dbReference type="Rhea" id="RHEA-COMP:12953"/>
        <dbReference type="Rhea" id="RHEA-COMP:12956"/>
        <dbReference type="ChEBI" id="CHEBI:15377"/>
        <dbReference type="ChEBI" id="CHEBI:15378"/>
        <dbReference type="ChEBI" id="CHEBI:15379"/>
        <dbReference type="ChEBI" id="CHEBI:16044"/>
        <dbReference type="ChEBI" id="CHEBI:45764"/>
        <dbReference type="ChEBI" id="CHEBI:57783"/>
        <dbReference type="ChEBI" id="CHEBI:58349"/>
        <dbReference type="EC" id="1.14.13.225"/>
    </reaction>
</comment>
<comment type="cofactor">
    <cofactor evidence="5">
        <name>FAD</name>
        <dbReference type="ChEBI" id="CHEBI:57692"/>
    </cofactor>
</comment>
<comment type="subcellular location">
    <subcellularLocation>
        <location evidence="3">Nucleus</location>
    </subcellularLocation>
    <subcellularLocation>
        <location evidence="4">Cytoplasm</location>
    </subcellularLocation>
</comment>
<comment type="similarity">
    <text evidence="10">Belongs to the Mical family.</text>
</comment>
<accession>F6QZ15</accession>
<protein>
    <recommendedName>
        <fullName evidence="3">[F-actin]-monooxygenase mical2</fullName>
        <ecNumber evidence="3">1.14.13.225</ecNumber>
    </recommendedName>
    <alternativeName>
        <fullName>Molecule interacting with CasL protein 2</fullName>
        <shortName>MICAL-2</shortName>
    </alternativeName>
</protein>
<proteinExistence type="inferred from homology"/>
<gene>
    <name evidence="3" type="primary">mical2</name>
</gene>